<sequence length="115" mass="13056">MTKILVLCIGLISFSASASADTSYTEIREYVNRTAADYCGKNKACQAEFAQKLIYAYKDGERDKSSRYKNDTLLKRYAKKWNTLECSVAEEKDKAACHSMVDRLVDSYNRGLSTR</sequence>
<protein>
    <recommendedName>
        <fullName>Valyl--tRNA ligase modifier</fullName>
    </recommendedName>
    <alternativeName>
        <fullName>Phage factor tau</fullName>
    </alternativeName>
    <alternativeName>
        <fullName>Tau peptide</fullName>
    </alternativeName>
</protein>
<keyword id="KW-1185">Reference proteome</keyword>
<gene>
    <name type="primary">vs</name>
</gene>
<reference key="1">
    <citation type="journal article" date="1986" name="Nucleic Acids Res.">
        <title>Nucleotide sequence and analysis of the 58.3 to 65.5-kb early region of bacteriophage T4.</title>
        <authorList>
            <person name="Valerie K."/>
            <person name="Stevens J."/>
            <person name="Lynch M."/>
            <person name="Henderson E.E."/>
            <person name="de Riel J.K."/>
        </authorList>
    </citation>
    <scope>NUCLEOTIDE SEQUENCE [GENOMIC DNA]</scope>
</reference>
<reference key="2">
    <citation type="journal article" date="2003" name="Microbiol. Mol. Biol. Rev.">
        <title>Bacteriophage T4 genome.</title>
        <authorList>
            <person name="Miller E.S."/>
            <person name="Kutter E."/>
            <person name="Mosig G."/>
            <person name="Arisaka F."/>
            <person name="Kunisawa T."/>
            <person name="Ruger W."/>
        </authorList>
    </citation>
    <scope>NUCLEOTIDE SEQUENCE [LARGE SCALE GENOMIC DNA]</scope>
</reference>
<reference key="3">
    <citation type="journal article" date="1975" name="J. Virol.">
        <title>Temporal appearance of bacteriophage T4-modified valyl tRNA synthetase in Escherichia coli.</title>
        <authorList>
            <person name="Muller U.R."/>
            <person name="Marchin G.L."/>
        </authorList>
    </citation>
    <scope>FUNCTION</scope>
</reference>
<reference key="4">
    <citation type="journal article" date="1975" name="Virology">
        <title>A gene of bacteriophage T4 controlling the modification of host valyl-tRNA synthetase.</title>
        <authorList>
            <person name="McClain W.H."/>
            <person name="Marchin G.L."/>
            <person name="Neidhardt F.C."/>
        </authorList>
    </citation>
    <scope>FUNCTION</scope>
</reference>
<reference key="5">
    <citation type="journal article" date="1977" name="J. Biol. Chem.">
        <title>Purification and properties of a T4 bacteriophage factor that modifies valyl-tRNA synthetase of Escherichia coli.</title>
        <authorList>
            <person name="Muller U.R."/>
            <person name="Marchin G.L."/>
        </authorList>
    </citation>
    <scope>FUNCTION</scope>
    <scope>CHARACTERIZATION</scope>
</reference>
<organism>
    <name type="scientific">Enterobacteria phage T4</name>
    <name type="common">Bacteriophage T4</name>
    <dbReference type="NCBI Taxonomy" id="10665"/>
    <lineage>
        <taxon>Viruses</taxon>
        <taxon>Duplodnaviria</taxon>
        <taxon>Heunggongvirae</taxon>
        <taxon>Uroviricota</taxon>
        <taxon>Caudoviricetes</taxon>
        <taxon>Straboviridae</taxon>
        <taxon>Tevenvirinae</taxon>
        <taxon>Tequatrovirus</taxon>
    </lineage>
</organism>
<dbReference type="EMBL" id="X04567">
    <property type="protein sequence ID" value="CAA28229.1"/>
    <property type="molecule type" value="Genomic_DNA"/>
</dbReference>
<dbReference type="EMBL" id="AF158101">
    <property type="protein sequence ID" value="AAD42671.1"/>
    <property type="molecule type" value="Genomic_DNA"/>
</dbReference>
<dbReference type="RefSeq" id="NP_049724.1">
    <property type="nucleotide sequence ID" value="NC_000866.4"/>
</dbReference>
<dbReference type="GeneID" id="1258658"/>
<dbReference type="KEGG" id="vg:1258658"/>
<dbReference type="OrthoDB" id="15033at10239"/>
<dbReference type="Proteomes" id="UP000009087">
    <property type="component" value="Segment"/>
</dbReference>
<feature type="chain" id="PRO_0000165073" description="Valyl--tRNA ligase modifier">
    <location>
        <begin position="1"/>
        <end position="115"/>
    </location>
</feature>
<accession>P13310</accession>
<proteinExistence type="evidence at protein level"/>
<name>VS_BPT4</name>
<organismHost>
    <name type="scientific">Escherichia coli</name>
    <dbReference type="NCBI Taxonomy" id="562"/>
</organismHost>
<comment type="function">
    <text evidence="1 2 3">Binds to the host (E.coli) valyl--tRNA ligase and thereby changes several of its physicochemical properties.</text>
</comment>
<evidence type="ECO:0000269" key="1">
    <source>
    </source>
</evidence>
<evidence type="ECO:0000269" key="2">
    <source>
    </source>
</evidence>
<evidence type="ECO:0000269" key="3">
    <source>
    </source>
</evidence>